<evidence type="ECO:0000255" key="1">
    <source>
        <dbReference type="HAMAP-Rule" id="MF_03117"/>
    </source>
</evidence>
<evidence type="ECO:0000305" key="2"/>
<feature type="chain" id="PRO_0000377657" description="Enolase-phosphatase E1">
    <location>
        <begin position="1"/>
        <end position="227"/>
    </location>
</feature>
<feature type="binding site" evidence="1">
    <location>
        <position position="11"/>
    </location>
    <ligand>
        <name>Mg(2+)</name>
        <dbReference type="ChEBI" id="CHEBI:18420"/>
    </ligand>
</feature>
<feature type="binding site" evidence="1">
    <location>
        <position position="13"/>
    </location>
    <ligand>
        <name>Mg(2+)</name>
        <dbReference type="ChEBI" id="CHEBI:18420"/>
    </ligand>
</feature>
<feature type="binding site" evidence="1">
    <location>
        <begin position="118"/>
        <end position="119"/>
    </location>
    <ligand>
        <name>substrate</name>
    </ligand>
</feature>
<feature type="binding site" evidence="1">
    <location>
        <position position="161"/>
    </location>
    <ligand>
        <name>substrate</name>
    </ligand>
</feature>
<feature type="binding site" evidence="1">
    <location>
        <position position="186"/>
    </location>
    <ligand>
        <name>Mg(2+)</name>
        <dbReference type="ChEBI" id="CHEBI:18420"/>
    </ligand>
</feature>
<accession>B5VH97</accession>
<protein>
    <recommendedName>
        <fullName evidence="1">Enolase-phosphatase E1</fullName>
        <ecNumber evidence="1">3.1.3.77</ecNumber>
    </recommendedName>
    <alternativeName>
        <fullName evidence="1">2,3-diketo-5-methylthio-1-phosphopentane phosphatase</fullName>
    </alternativeName>
    <alternativeName>
        <fullName evidence="1">Unknown transcript 4 protein</fullName>
    </alternativeName>
</protein>
<sequence length="227" mass="25208">MGDNYSTYLLDIEGTVCPISFVKETLFPYFTKKVPQLVQQDTRDSPVSNILSQFHIDDKEQLQAHILELVAKDVKDPILKQLQGYIWAQGYESGQIKAPVYADAIDFIKRKKRVFIYSSGSVKAQKLLFGYVQDPNAPAHDSLDLNSYIDGYFDINTSGKKTETQSYANILRDIGAKASEVLFLSDNPLELDAAAGVGIATGLASRPGNAPVPDGQKYQVYKDFETL</sequence>
<keyword id="KW-0028">Amino-acid biosynthesis</keyword>
<keyword id="KW-0963">Cytoplasm</keyword>
<keyword id="KW-0378">Hydrolase</keyword>
<keyword id="KW-0460">Magnesium</keyword>
<keyword id="KW-0479">Metal-binding</keyword>
<keyword id="KW-0486">Methionine biosynthesis</keyword>
<keyword id="KW-0539">Nucleus</keyword>
<organism>
    <name type="scientific">Saccharomyces cerevisiae (strain AWRI1631)</name>
    <name type="common">Baker's yeast</name>
    <dbReference type="NCBI Taxonomy" id="545124"/>
    <lineage>
        <taxon>Eukaryota</taxon>
        <taxon>Fungi</taxon>
        <taxon>Dikarya</taxon>
        <taxon>Ascomycota</taxon>
        <taxon>Saccharomycotina</taxon>
        <taxon>Saccharomycetes</taxon>
        <taxon>Saccharomycetales</taxon>
        <taxon>Saccharomycetaceae</taxon>
        <taxon>Saccharomyces</taxon>
    </lineage>
</organism>
<gene>
    <name evidence="1" type="primary">UTR4</name>
    <name type="ORF">AWRI1631_50320</name>
</gene>
<comment type="function">
    <text evidence="1">Bifunctional enzyme that catalyzes the enolization of 2,3-diketo-5-methylthiopentyl-1-phosphate (DK-MTP-1-P) into the intermediate 2-hydroxy-3-keto-5-methylthiopentenyl-1-phosphate (HK-MTPenyl-1-P), which is then dephosphorylated to form the acireductone 1,2-dihydroxy-3-keto-5-methylthiopentene (DHK-MTPene).</text>
</comment>
<comment type="catalytic activity">
    <reaction evidence="1">
        <text>5-methylsulfanyl-2,3-dioxopentyl phosphate + H2O = 1,2-dihydroxy-5-(methylsulfanyl)pent-1-en-3-one + phosphate</text>
        <dbReference type="Rhea" id="RHEA:21700"/>
        <dbReference type="ChEBI" id="CHEBI:15377"/>
        <dbReference type="ChEBI" id="CHEBI:43474"/>
        <dbReference type="ChEBI" id="CHEBI:49252"/>
        <dbReference type="ChEBI" id="CHEBI:58828"/>
        <dbReference type="EC" id="3.1.3.77"/>
    </reaction>
</comment>
<comment type="cofactor">
    <cofactor evidence="1">
        <name>Mg(2+)</name>
        <dbReference type="ChEBI" id="CHEBI:18420"/>
    </cofactor>
    <text evidence="1">Binds 1 Mg(2+) ion per subunit.</text>
</comment>
<comment type="pathway">
    <text evidence="1">Amino-acid biosynthesis; L-methionine biosynthesis via salvage pathway; L-methionine from S-methyl-5-thio-alpha-D-ribose 1-phosphate: step 3/6.</text>
</comment>
<comment type="pathway">
    <text evidence="1">Amino-acid biosynthesis; L-methionine biosynthesis via salvage pathway; L-methionine from S-methyl-5-thio-alpha-D-ribose 1-phosphate: step 4/6.</text>
</comment>
<comment type="subunit">
    <text evidence="1">Monomer.</text>
</comment>
<comment type="subcellular location">
    <subcellularLocation>
        <location evidence="1">Cytoplasm</location>
    </subcellularLocation>
    <subcellularLocation>
        <location evidence="1">Nucleus</location>
    </subcellularLocation>
</comment>
<comment type="similarity">
    <text evidence="1">Belongs to the HAD-like hydrolase superfamily. MasA/MtnC family.</text>
</comment>
<comment type="sequence caution" evidence="2">
    <conflict type="erroneous initiation">
        <sequence resource="EMBL-CDS" id="EDZ72697"/>
    </conflict>
    <text>Extended N-terminus.</text>
</comment>
<name>ENOPH_YEAS6</name>
<reference key="1">
    <citation type="journal article" date="2008" name="FEMS Yeast Res.">
        <title>Comparative genome analysis of a Saccharomyces cerevisiae wine strain.</title>
        <authorList>
            <person name="Borneman A.R."/>
            <person name="Forgan A.H."/>
            <person name="Pretorius I.S."/>
            <person name="Chambers P.J."/>
        </authorList>
    </citation>
    <scope>NUCLEOTIDE SEQUENCE [LARGE SCALE GENOMIC DNA]</scope>
    <source>
        <strain>AWRI1631</strain>
    </source>
</reference>
<dbReference type="EC" id="3.1.3.77" evidence="1"/>
<dbReference type="EMBL" id="ABSV01000631">
    <property type="protein sequence ID" value="EDZ72697.1"/>
    <property type="status" value="ALT_INIT"/>
    <property type="molecule type" value="Genomic_DNA"/>
</dbReference>
<dbReference type="SMR" id="B5VH97"/>
<dbReference type="OrthoDB" id="27667at4893"/>
<dbReference type="UniPathway" id="UPA00904">
    <property type="reaction ID" value="UER00876"/>
</dbReference>
<dbReference type="UniPathway" id="UPA00904">
    <property type="reaction ID" value="UER00877"/>
</dbReference>
<dbReference type="Proteomes" id="UP000008988">
    <property type="component" value="Unassembled WGS sequence"/>
</dbReference>
<dbReference type="GO" id="GO:0005737">
    <property type="term" value="C:cytoplasm"/>
    <property type="evidence" value="ECO:0007669"/>
    <property type="project" value="UniProtKB-SubCell"/>
</dbReference>
<dbReference type="GO" id="GO:0005634">
    <property type="term" value="C:nucleus"/>
    <property type="evidence" value="ECO:0007669"/>
    <property type="project" value="UniProtKB-SubCell"/>
</dbReference>
<dbReference type="GO" id="GO:0043874">
    <property type="term" value="F:acireductone synthase activity"/>
    <property type="evidence" value="ECO:0007669"/>
    <property type="project" value="UniProtKB-EC"/>
</dbReference>
<dbReference type="GO" id="GO:0000287">
    <property type="term" value="F:magnesium ion binding"/>
    <property type="evidence" value="ECO:0007669"/>
    <property type="project" value="UniProtKB-UniRule"/>
</dbReference>
<dbReference type="GO" id="GO:0019509">
    <property type="term" value="P:L-methionine salvage from methylthioadenosine"/>
    <property type="evidence" value="ECO:0007669"/>
    <property type="project" value="UniProtKB-UniRule"/>
</dbReference>
<dbReference type="CDD" id="cd01629">
    <property type="entry name" value="HAD_EP"/>
    <property type="match status" value="1"/>
</dbReference>
<dbReference type="FunFam" id="3.40.50.1000:FF:000079">
    <property type="entry name" value="Enolase-phosphatase E1"/>
    <property type="match status" value="1"/>
</dbReference>
<dbReference type="Gene3D" id="1.10.720.60">
    <property type="match status" value="1"/>
</dbReference>
<dbReference type="Gene3D" id="3.40.50.1000">
    <property type="entry name" value="HAD superfamily/HAD-like"/>
    <property type="match status" value="1"/>
</dbReference>
<dbReference type="HAMAP" id="MF_03117">
    <property type="entry name" value="Salvage_MtnC_euk"/>
    <property type="match status" value="1"/>
</dbReference>
<dbReference type="InterPro" id="IPR023943">
    <property type="entry name" value="Enolase-ppase_E1"/>
</dbReference>
<dbReference type="InterPro" id="IPR027511">
    <property type="entry name" value="ENOPH1_eukaryotes"/>
</dbReference>
<dbReference type="InterPro" id="IPR036412">
    <property type="entry name" value="HAD-like_sf"/>
</dbReference>
<dbReference type="InterPro" id="IPR023214">
    <property type="entry name" value="HAD_sf"/>
</dbReference>
<dbReference type="NCBIfam" id="TIGR01691">
    <property type="entry name" value="enolase-ppase"/>
    <property type="match status" value="1"/>
</dbReference>
<dbReference type="PANTHER" id="PTHR20371">
    <property type="entry name" value="ENOLASE-PHOSPHATASE E1"/>
    <property type="match status" value="1"/>
</dbReference>
<dbReference type="PANTHER" id="PTHR20371:SF1">
    <property type="entry name" value="ENOLASE-PHOSPHATASE E1"/>
    <property type="match status" value="1"/>
</dbReference>
<dbReference type="Pfam" id="PF00702">
    <property type="entry name" value="Hydrolase"/>
    <property type="match status" value="1"/>
</dbReference>
<dbReference type="SFLD" id="SFLDG01133">
    <property type="entry name" value="C1.5.4:_Enolase-phosphatase_Li"/>
    <property type="match status" value="1"/>
</dbReference>
<dbReference type="SFLD" id="SFLDF00044">
    <property type="entry name" value="enolase-phosphatase"/>
    <property type="match status" value="1"/>
</dbReference>
<dbReference type="SUPFAM" id="SSF56784">
    <property type="entry name" value="HAD-like"/>
    <property type="match status" value="1"/>
</dbReference>
<proteinExistence type="inferred from homology"/>